<keyword id="KW-1185">Reference proteome</keyword>
<keyword id="KW-0687">Ribonucleoprotein</keyword>
<keyword id="KW-0689">Ribosomal protein</keyword>
<proteinExistence type="inferred from homology"/>
<accession>Q6FR56</accession>
<protein>
    <recommendedName>
        <fullName evidence="2">Small ribosomal subunit protein uS9</fullName>
    </recommendedName>
    <alternativeName>
        <fullName>40S ribosomal protein S16</fullName>
    </alternativeName>
</protein>
<gene>
    <name type="primary">RPS16</name>
    <name type="ordered locus">CAGL0I00792g</name>
</gene>
<sequence length="143" mass="15813">MSTVPSVQTFGKKKSATAVAHVKAGKGLIKVNGSPITLVEPEILRFKVYEPLLLVGLDKFANIDIRVRVTGGGHVSQVYAIRQAIAKGLVAYHQKFVDEQSKNELKKAFTSYDRTLLIADARRPEPKKFGGKGARARFQKSYR</sequence>
<comment type="similarity">
    <text evidence="2">Belongs to the universal ribosomal protein uS9 family.</text>
</comment>
<evidence type="ECO:0000256" key="1">
    <source>
        <dbReference type="SAM" id="MobiDB-lite"/>
    </source>
</evidence>
<evidence type="ECO:0000305" key="2"/>
<feature type="chain" id="PRO_0000111497" description="Small ribosomal subunit protein uS9">
    <location>
        <begin position="1"/>
        <end position="143"/>
    </location>
</feature>
<feature type="region of interest" description="Disordered" evidence="1">
    <location>
        <begin position="124"/>
        <end position="143"/>
    </location>
</feature>
<feature type="compositionally biased region" description="Basic residues" evidence="1">
    <location>
        <begin position="134"/>
        <end position="143"/>
    </location>
</feature>
<name>RS16_CANGA</name>
<dbReference type="EMBL" id="CR380955">
    <property type="protein sequence ID" value="CAG60225.1"/>
    <property type="molecule type" value="Genomic_DNA"/>
</dbReference>
<dbReference type="RefSeq" id="XP_447288.1">
    <property type="nucleotide sequence ID" value="XM_447288.1"/>
</dbReference>
<dbReference type="SMR" id="Q6FR56"/>
<dbReference type="FunCoup" id="Q6FR56">
    <property type="interactions" value="872"/>
</dbReference>
<dbReference type="STRING" id="284593.Q6FR56"/>
<dbReference type="EnsemblFungi" id="CAGL0I00792g-T">
    <property type="protein sequence ID" value="CAGL0I00792g-T-p1"/>
    <property type="gene ID" value="CAGL0I00792g"/>
</dbReference>
<dbReference type="KEGG" id="cgr:2889042"/>
<dbReference type="CGD" id="CAL0132732">
    <property type="gene designation" value="CAGL0I00792g"/>
</dbReference>
<dbReference type="VEuPathDB" id="FungiDB:B1J91_I00792g"/>
<dbReference type="VEuPathDB" id="FungiDB:CAGL0I00792g"/>
<dbReference type="eggNOG" id="KOG1753">
    <property type="taxonomic scope" value="Eukaryota"/>
</dbReference>
<dbReference type="HOGENOM" id="CLU_046483_4_0_1"/>
<dbReference type="InParanoid" id="Q6FR56"/>
<dbReference type="OMA" id="WPIEMAR"/>
<dbReference type="Proteomes" id="UP000002428">
    <property type="component" value="Chromosome I"/>
</dbReference>
<dbReference type="GO" id="GO:0022627">
    <property type="term" value="C:cytosolic small ribosomal subunit"/>
    <property type="evidence" value="ECO:0007669"/>
    <property type="project" value="TreeGrafter"/>
</dbReference>
<dbReference type="GO" id="GO:0062040">
    <property type="term" value="C:fungal biofilm matrix"/>
    <property type="evidence" value="ECO:0000314"/>
    <property type="project" value="CGD"/>
</dbReference>
<dbReference type="GO" id="GO:0003723">
    <property type="term" value="F:RNA binding"/>
    <property type="evidence" value="ECO:0007669"/>
    <property type="project" value="TreeGrafter"/>
</dbReference>
<dbReference type="GO" id="GO:0003735">
    <property type="term" value="F:structural constituent of ribosome"/>
    <property type="evidence" value="ECO:0007669"/>
    <property type="project" value="InterPro"/>
</dbReference>
<dbReference type="GO" id="GO:0000462">
    <property type="term" value="P:maturation of SSU-rRNA from tricistronic rRNA transcript (SSU-rRNA, 5.8S rRNA, LSU-rRNA)"/>
    <property type="evidence" value="ECO:0007669"/>
    <property type="project" value="TreeGrafter"/>
</dbReference>
<dbReference type="GO" id="GO:0006412">
    <property type="term" value="P:translation"/>
    <property type="evidence" value="ECO:0007669"/>
    <property type="project" value="InterPro"/>
</dbReference>
<dbReference type="FunFam" id="3.30.230.10:FF:000007">
    <property type="entry name" value="40S ribosomal protein S16"/>
    <property type="match status" value="1"/>
</dbReference>
<dbReference type="Gene3D" id="3.30.230.10">
    <property type="match status" value="1"/>
</dbReference>
<dbReference type="InterPro" id="IPR020568">
    <property type="entry name" value="Ribosomal_Su5_D2-typ_SF"/>
</dbReference>
<dbReference type="InterPro" id="IPR000754">
    <property type="entry name" value="Ribosomal_uS9"/>
</dbReference>
<dbReference type="InterPro" id="IPR020574">
    <property type="entry name" value="Ribosomal_uS9_CS"/>
</dbReference>
<dbReference type="InterPro" id="IPR014721">
    <property type="entry name" value="Ribsml_uS5_D2-typ_fold_subgr"/>
</dbReference>
<dbReference type="NCBIfam" id="NF001749">
    <property type="entry name" value="PRK00474.1"/>
    <property type="match status" value="1"/>
</dbReference>
<dbReference type="PANTHER" id="PTHR21569:SF16">
    <property type="entry name" value="RIBOSOMAL PROTEIN S16"/>
    <property type="match status" value="1"/>
</dbReference>
<dbReference type="PANTHER" id="PTHR21569">
    <property type="entry name" value="RIBOSOMAL PROTEIN S9"/>
    <property type="match status" value="1"/>
</dbReference>
<dbReference type="Pfam" id="PF00380">
    <property type="entry name" value="Ribosomal_S9"/>
    <property type="match status" value="1"/>
</dbReference>
<dbReference type="SUPFAM" id="SSF54211">
    <property type="entry name" value="Ribosomal protein S5 domain 2-like"/>
    <property type="match status" value="1"/>
</dbReference>
<dbReference type="PROSITE" id="PS00360">
    <property type="entry name" value="RIBOSOMAL_S9"/>
    <property type="match status" value="1"/>
</dbReference>
<organism>
    <name type="scientific">Candida glabrata (strain ATCC 2001 / BCRC 20586 / JCM 3761 / NBRC 0622 / NRRL Y-65 / CBS 138)</name>
    <name type="common">Yeast</name>
    <name type="synonym">Nakaseomyces glabratus</name>
    <dbReference type="NCBI Taxonomy" id="284593"/>
    <lineage>
        <taxon>Eukaryota</taxon>
        <taxon>Fungi</taxon>
        <taxon>Dikarya</taxon>
        <taxon>Ascomycota</taxon>
        <taxon>Saccharomycotina</taxon>
        <taxon>Saccharomycetes</taxon>
        <taxon>Saccharomycetales</taxon>
        <taxon>Saccharomycetaceae</taxon>
        <taxon>Nakaseomyces</taxon>
    </lineage>
</organism>
<reference key="1">
    <citation type="journal article" date="2004" name="Nature">
        <title>Genome evolution in yeasts.</title>
        <authorList>
            <person name="Dujon B."/>
            <person name="Sherman D."/>
            <person name="Fischer G."/>
            <person name="Durrens P."/>
            <person name="Casaregola S."/>
            <person name="Lafontaine I."/>
            <person name="de Montigny J."/>
            <person name="Marck C."/>
            <person name="Neuveglise C."/>
            <person name="Talla E."/>
            <person name="Goffard N."/>
            <person name="Frangeul L."/>
            <person name="Aigle M."/>
            <person name="Anthouard V."/>
            <person name="Babour A."/>
            <person name="Barbe V."/>
            <person name="Barnay S."/>
            <person name="Blanchin S."/>
            <person name="Beckerich J.-M."/>
            <person name="Beyne E."/>
            <person name="Bleykasten C."/>
            <person name="Boisrame A."/>
            <person name="Boyer J."/>
            <person name="Cattolico L."/>
            <person name="Confanioleri F."/>
            <person name="de Daruvar A."/>
            <person name="Despons L."/>
            <person name="Fabre E."/>
            <person name="Fairhead C."/>
            <person name="Ferry-Dumazet H."/>
            <person name="Groppi A."/>
            <person name="Hantraye F."/>
            <person name="Hennequin C."/>
            <person name="Jauniaux N."/>
            <person name="Joyet P."/>
            <person name="Kachouri R."/>
            <person name="Kerrest A."/>
            <person name="Koszul R."/>
            <person name="Lemaire M."/>
            <person name="Lesur I."/>
            <person name="Ma L."/>
            <person name="Muller H."/>
            <person name="Nicaud J.-M."/>
            <person name="Nikolski M."/>
            <person name="Oztas S."/>
            <person name="Ozier-Kalogeropoulos O."/>
            <person name="Pellenz S."/>
            <person name="Potier S."/>
            <person name="Richard G.-F."/>
            <person name="Straub M.-L."/>
            <person name="Suleau A."/>
            <person name="Swennen D."/>
            <person name="Tekaia F."/>
            <person name="Wesolowski-Louvel M."/>
            <person name="Westhof E."/>
            <person name="Wirth B."/>
            <person name="Zeniou-Meyer M."/>
            <person name="Zivanovic Y."/>
            <person name="Bolotin-Fukuhara M."/>
            <person name="Thierry A."/>
            <person name="Bouchier C."/>
            <person name="Caudron B."/>
            <person name="Scarpelli C."/>
            <person name="Gaillardin C."/>
            <person name="Weissenbach J."/>
            <person name="Wincker P."/>
            <person name="Souciet J.-L."/>
        </authorList>
    </citation>
    <scope>NUCLEOTIDE SEQUENCE [LARGE SCALE GENOMIC DNA]</scope>
    <source>
        <strain>ATCC 2001 / BCRC 20586 / JCM 3761 / NBRC 0622 / NRRL Y-65 / CBS 138</strain>
    </source>
</reference>